<accession>P0DRD6</accession>
<keyword id="KW-0528">Neurotoxin</keyword>
<keyword id="KW-0964">Secreted</keyword>
<keyword id="KW-0732">Signal</keyword>
<keyword id="KW-0800">Toxin</keyword>
<feature type="signal peptide" evidence="1">
    <location>
        <begin position="1"/>
        <end position="23"/>
    </location>
</feature>
<feature type="propeptide" id="PRO_0000461267" evidence="5">
    <location>
        <begin position="24"/>
        <end position="31"/>
    </location>
</feature>
<feature type="peptide" id="PRO_0000461268" description="Myrmicitoxin(1)-Pm7a" evidence="2">
    <location>
        <begin position="32"/>
        <end position="57"/>
    </location>
</feature>
<evidence type="ECO:0000255" key="1"/>
<evidence type="ECO:0000269" key="2">
    <source>
    </source>
</evidence>
<evidence type="ECO:0000303" key="3">
    <source>
    </source>
</evidence>
<evidence type="ECO:0000305" key="4"/>
<evidence type="ECO:0000305" key="5">
    <source>
    </source>
</evidence>
<name>TX7A_POGMA</name>
<dbReference type="EMBL" id="OR128466">
    <property type="protein sequence ID" value="WMI02504.1"/>
    <property type="molecule type" value="mRNA"/>
</dbReference>
<dbReference type="GO" id="GO:0005576">
    <property type="term" value="C:extracellular region"/>
    <property type="evidence" value="ECO:0007669"/>
    <property type="project" value="UniProtKB-SubCell"/>
</dbReference>
<dbReference type="GO" id="GO:0090729">
    <property type="term" value="F:toxin activity"/>
    <property type="evidence" value="ECO:0007669"/>
    <property type="project" value="UniProtKB-KW"/>
</dbReference>
<proteinExistence type="inferred from homology"/>
<protein>
    <recommendedName>
        <fullName evidence="3">Myrmicitoxin(1)-Pm7a</fullName>
        <shortName evidence="3">MYRTX(1)-Pm7a</shortName>
    </recommendedName>
</protein>
<organism>
    <name type="scientific">Pogonomyrmex maricopa</name>
    <name type="common">Maricopa harvester ant</name>
    <dbReference type="NCBI Taxonomy" id="144040"/>
    <lineage>
        <taxon>Eukaryota</taxon>
        <taxon>Metazoa</taxon>
        <taxon>Ecdysozoa</taxon>
        <taxon>Arthropoda</taxon>
        <taxon>Hexapoda</taxon>
        <taxon>Insecta</taxon>
        <taxon>Pterygota</taxon>
        <taxon>Neoptera</taxon>
        <taxon>Endopterygota</taxon>
        <taxon>Hymenoptera</taxon>
        <taxon>Apocrita</taxon>
        <taxon>Aculeata</taxon>
        <taxon>Formicoidea</taxon>
        <taxon>Formicidae</taxon>
        <taxon>Myrmicinae</taxon>
        <taxon>Pogonomyrmex</taxon>
    </lineage>
</organism>
<sequence>MMKIIYAFLLIAVVAFMGSGIMAEPLAEAIAADKPGQAKEIGIFDRITELINWLVNH</sequence>
<reference key="1">
    <citation type="journal article" date="2024" name="J. Biol. Chem.">
        <title>Peptide toxins that target vertebrate voltage-gated sodium channels underly the painful stings of harvester ants.</title>
        <authorList>
            <person name="Robinson S.D."/>
            <person name="Deuis J.R."/>
            <person name="Niu P."/>
            <person name="Touchard A."/>
            <person name="Mueller A."/>
            <person name="Schendel V."/>
            <person name="Brinkwirth N."/>
            <person name="King G.F."/>
            <person name="Vetter I."/>
            <person name="Schmidt J.O."/>
        </authorList>
    </citation>
    <scope>NUCLEOTIDE SEQUENCE [MRNA]</scope>
    <source>
        <tissue>Venom</tissue>
        <tissue>Venom gland</tissue>
    </source>
</reference>
<comment type="function">
    <text evidence="5">Probable neurotoxin.</text>
</comment>
<comment type="subcellular location">
    <subcellularLocation>
        <location evidence="2">Secreted</location>
    </subcellularLocation>
</comment>
<comment type="tissue specificity">
    <text evidence="5">Expressed by the venom gland.</text>
</comment>
<comment type="similarity">
    <text evidence="4">Belongs to the formicidae venom clade 4 family.</text>
</comment>